<proteinExistence type="inferred from homology"/>
<gene>
    <name evidence="1" type="primary">rpl18a</name>
    <name evidence="1" type="synonym">rpl20e</name>
    <name evidence="1" type="synonym">rplX</name>
    <name type="ordered locus">Hbut_1600</name>
</gene>
<organism>
    <name type="scientific">Hyperthermus butylicus (strain DSM 5456 / JCM 9403 / PLM1-5)</name>
    <dbReference type="NCBI Taxonomy" id="415426"/>
    <lineage>
        <taxon>Archaea</taxon>
        <taxon>Thermoproteota</taxon>
        <taxon>Thermoprotei</taxon>
        <taxon>Desulfurococcales</taxon>
        <taxon>Pyrodictiaceae</taxon>
        <taxon>Hyperthermus</taxon>
    </lineage>
</organism>
<name>RL18A_HYPBU</name>
<protein>
    <recommendedName>
        <fullName evidence="1">Large ribosomal subunit protein eL20</fullName>
    </recommendedName>
    <alternativeName>
        <fullName evidence="2">50S ribosomal protein L18Ae</fullName>
    </alternativeName>
    <alternativeName>
        <fullName evidence="1">50S ribosomal protein L20e</fullName>
    </alternativeName>
    <alternativeName>
        <fullName evidence="1">50S ribosomal protein LX</fullName>
    </alternativeName>
</protein>
<comment type="subunit">
    <text evidence="1">Part of the 50S ribosomal subunit. Binds 23S rRNA.</text>
</comment>
<comment type="similarity">
    <text evidence="1">Belongs to the eukaryotic ribosomal protein eL20 family.</text>
</comment>
<dbReference type="EMBL" id="CP000493">
    <property type="protein sequence ID" value="ABM81419.1"/>
    <property type="molecule type" value="Genomic_DNA"/>
</dbReference>
<dbReference type="RefSeq" id="WP_011822737.1">
    <property type="nucleotide sequence ID" value="NC_008818.1"/>
</dbReference>
<dbReference type="SMR" id="A2BN58"/>
<dbReference type="STRING" id="415426.Hbut_1600"/>
<dbReference type="EnsemblBacteria" id="ABM81419">
    <property type="protein sequence ID" value="ABM81419"/>
    <property type="gene ID" value="Hbut_1600"/>
</dbReference>
<dbReference type="GeneID" id="4781489"/>
<dbReference type="KEGG" id="hbu:Hbut_1600"/>
<dbReference type="eggNOG" id="arCOG04175">
    <property type="taxonomic scope" value="Archaea"/>
</dbReference>
<dbReference type="HOGENOM" id="CLU_177460_0_0_2"/>
<dbReference type="OrthoDB" id="191241at2157"/>
<dbReference type="Proteomes" id="UP000002593">
    <property type="component" value="Chromosome"/>
</dbReference>
<dbReference type="GO" id="GO:1990904">
    <property type="term" value="C:ribonucleoprotein complex"/>
    <property type="evidence" value="ECO:0007669"/>
    <property type="project" value="UniProtKB-KW"/>
</dbReference>
<dbReference type="GO" id="GO:0005840">
    <property type="term" value="C:ribosome"/>
    <property type="evidence" value="ECO:0007669"/>
    <property type="project" value="UniProtKB-KW"/>
</dbReference>
<dbReference type="GO" id="GO:0070180">
    <property type="term" value="F:large ribosomal subunit rRNA binding"/>
    <property type="evidence" value="ECO:0007669"/>
    <property type="project" value="UniProtKB-UniRule"/>
</dbReference>
<dbReference type="GO" id="GO:0003735">
    <property type="term" value="F:structural constituent of ribosome"/>
    <property type="evidence" value="ECO:0007669"/>
    <property type="project" value="InterPro"/>
</dbReference>
<dbReference type="GO" id="GO:0006412">
    <property type="term" value="P:translation"/>
    <property type="evidence" value="ECO:0007669"/>
    <property type="project" value="UniProtKB-UniRule"/>
</dbReference>
<dbReference type="Gene3D" id="3.10.20.10">
    <property type="match status" value="1"/>
</dbReference>
<dbReference type="HAMAP" id="MF_00273">
    <property type="entry name" value="Ribosomal_eL20"/>
    <property type="match status" value="1"/>
</dbReference>
<dbReference type="InterPro" id="IPR028877">
    <property type="entry name" value="Ribosomal_eL20"/>
</dbReference>
<dbReference type="InterPro" id="IPR023573">
    <property type="entry name" value="Ribosomal_eL20_dom"/>
</dbReference>
<dbReference type="NCBIfam" id="NF001981">
    <property type="entry name" value="PRK00773.1-1"/>
    <property type="match status" value="1"/>
</dbReference>
<dbReference type="Pfam" id="PF01775">
    <property type="entry name" value="Ribosomal_L18A"/>
    <property type="match status" value="1"/>
</dbReference>
<dbReference type="SUPFAM" id="SSF160374">
    <property type="entry name" value="RplX-like"/>
    <property type="match status" value="1"/>
</dbReference>
<feature type="chain" id="PRO_1000003665" description="Large ribosomal subunit protein eL20">
    <location>
        <begin position="1"/>
        <end position="87"/>
    </location>
</feature>
<reference key="1">
    <citation type="journal article" date="2007" name="Archaea">
        <title>The genome of Hyperthermus butylicus: a sulfur-reducing, peptide fermenting, neutrophilic Crenarchaeote growing up to 108 degrees C.</title>
        <authorList>
            <person name="Bruegger K."/>
            <person name="Chen L."/>
            <person name="Stark M."/>
            <person name="Zibat A."/>
            <person name="Redder P."/>
            <person name="Ruepp A."/>
            <person name="Awayez M."/>
            <person name="She Q."/>
            <person name="Garrett R.A."/>
            <person name="Klenk H.-P."/>
        </authorList>
    </citation>
    <scope>NUCLEOTIDE SEQUENCE [LARGE SCALE GENOMIC DNA]</scope>
    <source>
        <strain>DSM 5456 / JCM 9403 / PLM1-5</strain>
    </source>
</reference>
<keyword id="KW-1185">Reference proteome</keyword>
<keyword id="KW-0687">Ribonucleoprotein</keyword>
<keyword id="KW-0689">Ribosomal protein</keyword>
<keyword id="KW-0694">RNA-binding</keyword>
<keyword id="KW-0699">rRNA-binding</keyword>
<evidence type="ECO:0000255" key="1">
    <source>
        <dbReference type="HAMAP-Rule" id="MF_00273"/>
    </source>
</evidence>
<evidence type="ECO:0000305" key="2"/>
<accession>A2BN58</accession>
<sequence>MGEVKFYLVEGRMLIRHDRMPEWWKFRKYVRALKPEHAVEKVLSELGSNHKVKRYHVKIERVVEVPPEEVPDRTLLVLASLTRWVKP</sequence>